<organism>
    <name type="scientific">Kunzea pulchella</name>
    <name type="common">Red kunzea</name>
    <dbReference type="NCBI Taxonomy" id="106046"/>
    <lineage>
        <taxon>Eukaryota</taxon>
        <taxon>Viridiplantae</taxon>
        <taxon>Streptophyta</taxon>
        <taxon>Embryophyta</taxon>
        <taxon>Tracheophyta</taxon>
        <taxon>Spermatophyta</taxon>
        <taxon>Magnoliopsida</taxon>
        <taxon>eudicotyledons</taxon>
        <taxon>Gunneridae</taxon>
        <taxon>Pentapetalae</taxon>
        <taxon>rosids</taxon>
        <taxon>malvids</taxon>
        <taxon>Myrtales</taxon>
        <taxon>Myrtaceae</taxon>
        <taxon>Myrtoideae</taxon>
        <taxon>Leptospermeae</taxon>
        <taxon>Kunzea</taxon>
    </lineage>
</organism>
<gene>
    <name evidence="1" type="primary">matK</name>
</gene>
<accession>Q9TKB6</accession>
<keyword id="KW-0150">Chloroplast</keyword>
<keyword id="KW-0507">mRNA processing</keyword>
<keyword id="KW-0934">Plastid</keyword>
<keyword id="KW-0694">RNA-binding</keyword>
<keyword id="KW-0819">tRNA processing</keyword>
<reference key="1">
    <citation type="journal article" date="2000" name="Aust. J. Bot.">
        <title>Molecular systematics of the Leptospermum suballiance (Myrtaceae).</title>
        <authorList>
            <person name="O'Brien M.M."/>
            <person name="Quinn C.J."/>
            <person name="Wilson P.G."/>
        </authorList>
        <dbReference type="AGRICOLA" id="IND22905647"/>
    </citation>
    <scope>NUCLEOTIDE SEQUENCE [GENOMIC DNA]</scope>
</reference>
<proteinExistence type="inferred from homology"/>
<sequence length="503" mass="60479">MEEFQGYLELDRSRQHYLLYPLLFREYIYALAHDHGLNRSILFESAGYDNKSSSIIVKRLITRMYQQNPLIFSAKDSIQNQFFGHNKNLYSQILSEGFAVIVEIPFSLRFLFLLERKEIAKSYHLRSIHSIFSFLEDKFTHLDYVSDVLIPYHIHLEILVQTLRYWVKDASSLHLLRLFLHDYWNSFITPKKHITFFFKGNPRLFLFLYNSHICEYEYIFLFLRNQSSHLRSTSSGIFFERIHFYVKIEHFVKVFFDNNFQCILWFLKDPFMHYVRYQGKFFMASKDTPLLMNKWKCYLVNLWQYHFSVWFQPGRIDINRLCKYSLDFLGYRSSVRLNSSVVRSQMLENLFLINNAMKKFETIVPIIPLIGSLYKSNFCNTFGHPISKPTRTHSSDSDIIDRFLRICRNLSHYHSGSSKKKSLYRVKYILRLSCVKTLARKHKRTVRTFVKRLGSEFLEEFLTEEEVFLSLIFPRTYSTSRRLYRGQIWYLDITSINDLVNYE</sequence>
<evidence type="ECO:0000255" key="1">
    <source>
        <dbReference type="HAMAP-Rule" id="MF_01390"/>
    </source>
</evidence>
<geneLocation type="chloroplast"/>
<comment type="function">
    <text evidence="1">Usually encoded in the trnK tRNA gene intron. Probably assists in splicing its own and other chloroplast group II introns.</text>
</comment>
<comment type="subcellular location">
    <subcellularLocation>
        <location>Plastid</location>
        <location>Chloroplast</location>
    </subcellularLocation>
</comment>
<comment type="similarity">
    <text evidence="1">Belongs to the intron maturase 2 family. MatK subfamily.</text>
</comment>
<protein>
    <recommendedName>
        <fullName evidence="1">Maturase K</fullName>
    </recommendedName>
    <alternativeName>
        <fullName evidence="1">Intron maturase</fullName>
    </alternativeName>
</protein>
<feature type="chain" id="PRO_0000143453" description="Maturase K">
    <location>
        <begin position="1"/>
        <end position="503"/>
    </location>
</feature>
<dbReference type="EMBL" id="AF184726">
    <property type="protein sequence ID" value="AAF05933.1"/>
    <property type="molecule type" value="Genomic_DNA"/>
</dbReference>
<dbReference type="GO" id="GO:0009507">
    <property type="term" value="C:chloroplast"/>
    <property type="evidence" value="ECO:0007669"/>
    <property type="project" value="UniProtKB-SubCell"/>
</dbReference>
<dbReference type="GO" id="GO:0003723">
    <property type="term" value="F:RNA binding"/>
    <property type="evidence" value="ECO:0007669"/>
    <property type="project" value="UniProtKB-KW"/>
</dbReference>
<dbReference type="GO" id="GO:0006397">
    <property type="term" value="P:mRNA processing"/>
    <property type="evidence" value="ECO:0007669"/>
    <property type="project" value="UniProtKB-KW"/>
</dbReference>
<dbReference type="GO" id="GO:0008380">
    <property type="term" value="P:RNA splicing"/>
    <property type="evidence" value="ECO:0007669"/>
    <property type="project" value="UniProtKB-UniRule"/>
</dbReference>
<dbReference type="GO" id="GO:0008033">
    <property type="term" value="P:tRNA processing"/>
    <property type="evidence" value="ECO:0007669"/>
    <property type="project" value="UniProtKB-KW"/>
</dbReference>
<dbReference type="HAMAP" id="MF_01390">
    <property type="entry name" value="MatK"/>
    <property type="match status" value="1"/>
</dbReference>
<dbReference type="InterPro" id="IPR024937">
    <property type="entry name" value="Domain_X"/>
</dbReference>
<dbReference type="InterPro" id="IPR002866">
    <property type="entry name" value="Maturase_MatK"/>
</dbReference>
<dbReference type="InterPro" id="IPR024942">
    <property type="entry name" value="Maturase_MatK_N"/>
</dbReference>
<dbReference type="PANTHER" id="PTHR34811">
    <property type="entry name" value="MATURASE K"/>
    <property type="match status" value="1"/>
</dbReference>
<dbReference type="PANTHER" id="PTHR34811:SF1">
    <property type="entry name" value="MATURASE K"/>
    <property type="match status" value="1"/>
</dbReference>
<dbReference type="Pfam" id="PF01348">
    <property type="entry name" value="Intron_maturas2"/>
    <property type="match status" value="1"/>
</dbReference>
<dbReference type="Pfam" id="PF01824">
    <property type="entry name" value="MatK_N"/>
    <property type="match status" value="1"/>
</dbReference>
<name>MATK_KUNPU</name>